<proteinExistence type="evidence at protein level"/>
<keyword id="KW-0903">Direct protein sequencing</keyword>
<keyword id="KW-0687">Ribonucleoprotein</keyword>
<keyword id="KW-0689">Ribosomal protein</keyword>
<keyword id="KW-0694">RNA-binding</keyword>
<keyword id="KW-0699">rRNA-binding</keyword>
<accession>P12731</accession>
<dbReference type="EMBL" id="X54994">
    <property type="protein sequence ID" value="CAA38738.1"/>
    <property type="molecule type" value="Genomic_DNA"/>
</dbReference>
<dbReference type="PIR" id="S10611">
    <property type="entry name" value="R3BS19"/>
</dbReference>
<dbReference type="SMR" id="P12731"/>
<dbReference type="GO" id="GO:0005737">
    <property type="term" value="C:cytoplasm"/>
    <property type="evidence" value="ECO:0007669"/>
    <property type="project" value="UniProtKB-ARBA"/>
</dbReference>
<dbReference type="GO" id="GO:0015935">
    <property type="term" value="C:small ribosomal subunit"/>
    <property type="evidence" value="ECO:0007669"/>
    <property type="project" value="InterPro"/>
</dbReference>
<dbReference type="GO" id="GO:0019843">
    <property type="term" value="F:rRNA binding"/>
    <property type="evidence" value="ECO:0007669"/>
    <property type="project" value="UniProtKB-UniRule"/>
</dbReference>
<dbReference type="GO" id="GO:0003735">
    <property type="term" value="F:structural constituent of ribosome"/>
    <property type="evidence" value="ECO:0007669"/>
    <property type="project" value="InterPro"/>
</dbReference>
<dbReference type="GO" id="GO:0000028">
    <property type="term" value="P:ribosomal small subunit assembly"/>
    <property type="evidence" value="ECO:0007669"/>
    <property type="project" value="TreeGrafter"/>
</dbReference>
<dbReference type="GO" id="GO:0006412">
    <property type="term" value="P:translation"/>
    <property type="evidence" value="ECO:0007669"/>
    <property type="project" value="UniProtKB-UniRule"/>
</dbReference>
<dbReference type="FunFam" id="3.30.860.10:FF:000001">
    <property type="entry name" value="30S ribosomal protein S19"/>
    <property type="match status" value="1"/>
</dbReference>
<dbReference type="Gene3D" id="3.30.860.10">
    <property type="entry name" value="30s Ribosomal Protein S19, Chain A"/>
    <property type="match status" value="1"/>
</dbReference>
<dbReference type="HAMAP" id="MF_00531">
    <property type="entry name" value="Ribosomal_uS19"/>
    <property type="match status" value="1"/>
</dbReference>
<dbReference type="InterPro" id="IPR002222">
    <property type="entry name" value="Ribosomal_uS19"/>
</dbReference>
<dbReference type="InterPro" id="IPR005732">
    <property type="entry name" value="Ribosomal_uS19_bac-type"/>
</dbReference>
<dbReference type="InterPro" id="IPR020934">
    <property type="entry name" value="Ribosomal_uS19_CS"/>
</dbReference>
<dbReference type="InterPro" id="IPR023575">
    <property type="entry name" value="Ribosomal_uS19_SF"/>
</dbReference>
<dbReference type="NCBIfam" id="TIGR01050">
    <property type="entry name" value="rpsS_bact"/>
    <property type="match status" value="1"/>
</dbReference>
<dbReference type="PANTHER" id="PTHR11880">
    <property type="entry name" value="RIBOSOMAL PROTEIN S19P FAMILY MEMBER"/>
    <property type="match status" value="1"/>
</dbReference>
<dbReference type="PANTHER" id="PTHR11880:SF8">
    <property type="entry name" value="SMALL RIBOSOMAL SUBUNIT PROTEIN US19M"/>
    <property type="match status" value="1"/>
</dbReference>
<dbReference type="Pfam" id="PF00203">
    <property type="entry name" value="Ribosomal_S19"/>
    <property type="match status" value="1"/>
</dbReference>
<dbReference type="PIRSF" id="PIRSF002144">
    <property type="entry name" value="Ribosomal_S19"/>
    <property type="match status" value="1"/>
</dbReference>
<dbReference type="PRINTS" id="PR00975">
    <property type="entry name" value="RIBOSOMALS19"/>
</dbReference>
<dbReference type="SUPFAM" id="SSF54570">
    <property type="entry name" value="Ribosomal protein S19"/>
    <property type="match status" value="1"/>
</dbReference>
<dbReference type="PROSITE" id="PS00323">
    <property type="entry name" value="RIBOSOMAL_S19"/>
    <property type="match status" value="1"/>
</dbReference>
<protein>
    <recommendedName>
        <fullName evidence="3">Small ribosomal subunit protein uS19</fullName>
    </recommendedName>
    <alternativeName>
        <fullName>30S ribosomal protein S19</fullName>
        <shortName>BS19</shortName>
    </alternativeName>
    <alternativeName>
        <fullName>BS17</fullName>
    </alternativeName>
</protein>
<name>RS19_GEOSE</name>
<sequence length="92" mass="10541">MGRSLKKGPFCDEHLMKKIEKLNETGQKQVIKTWSRRSTIFPQFVGHTIAVYDGRRHVPVYITEDMVGHKLGEFAPTATFRGHAGDDKKTKR</sequence>
<evidence type="ECO:0000269" key="1">
    <source>
    </source>
</evidence>
<evidence type="ECO:0000269" key="2">
    <source>
    </source>
</evidence>
<evidence type="ECO:0000305" key="3"/>
<gene>
    <name type="primary">rpsS</name>
</gene>
<reference key="1">
    <citation type="journal article" date="1990" name="Biol. Chem. Hoppe-Seyler">
        <title>Nucleotide sequences of Bacillus stearothermophilus ribosomal protein genes: part of the ribosomal S10 operon.</title>
        <authorList>
            <person name="Kroemer W.J."/>
            <person name="Hatakeyama T."/>
            <person name="Kimura M."/>
        </authorList>
    </citation>
    <scope>NUCLEOTIDE SEQUENCE [GENOMIC DNA]</scope>
    <source>
        <strain>ATCC 29609 / DSM 2027 / NCA 1503 / NCIMB 8924</strain>
    </source>
</reference>
<reference key="2">
    <citation type="journal article" date="1987" name="Eur. J. Biochem.">
        <title>Semi-preparative HPLC purification of ribosomal proteins from Bacillus stearothermophilus and sequence determination of the highly conserved protein S19.</title>
        <authorList>
            <person name="Hirano H."/>
            <person name="Eckart K."/>
            <person name="Kimura M."/>
            <person name="Wittmann-Liebold B."/>
        </authorList>
    </citation>
    <scope>PROTEIN SEQUENCE OF 2-92</scope>
    <source>
        <strain>799</strain>
        <strain>ATCC 29609 / DSM 2027 / NCA 1503 / NCIMB 8924</strain>
    </source>
</reference>
<reference key="3">
    <citation type="journal article" date="1974" name="FEBS Lett.">
        <title>Procaryotic ribosomal proteins: N-terminal sequence homologies and structural correspondence of 30 S ribosomal proteins from Escherichia coli and Bacillus stearothermophilus.</title>
        <authorList>
            <person name="Yaguchi M."/>
            <person name="Matheson A.T."/>
            <person name="Visentin L.P."/>
        </authorList>
    </citation>
    <scope>PROTEIN SEQUENCE OF 2-16</scope>
    <source>
        <strain>DSM 13240 / CIP 106956 / 10</strain>
    </source>
</reference>
<reference key="4">
    <citation type="journal article" date="1988" name="Biochemistry">
        <title>Cross-linked amino acids in the protein pair S13-S19 and sequence analysis of protein S13 of Bacillus stearothermophilus ribosomes.</title>
        <authorList>
            <person name="Brockmoeller J."/>
            <person name="Kamp R.M."/>
        </authorList>
    </citation>
    <scope>PROTEIN SEQUENCE OF 14-17; 25-29; 65-73 AND 74-79</scope>
    <scope>CROSS-LINKING TO S13</scope>
    <source>
        <strain>799</strain>
    </source>
</reference>
<feature type="initiator methionine" description="Removed" evidence="1 2">
    <location>
        <position position="1"/>
    </location>
</feature>
<feature type="chain" id="PRO_0000129779" description="Small ribosomal subunit protein uS19">
    <location>
        <begin position="2"/>
        <end position="92"/>
    </location>
</feature>
<feature type="sequence variant" description="In strain: 10.">
    <original>E</original>
    <variation>G</variation>
    <location>
        <position position="13"/>
    </location>
</feature>
<feature type="sequence variant" description="In strain: 10.">
    <original>L</original>
    <variation>I</variation>
    <location>
        <position position="15"/>
    </location>
</feature>
<feature type="sequence conflict" description="In Ref. 2; AA sequence and 3; AA sequence." evidence="3" ref="2 3">
    <original>C</original>
    <variation>S</variation>
    <location>
        <position position="11"/>
    </location>
</feature>
<feature type="sequence conflict" description="In Ref. 2; AA sequence." evidence="3" ref="2">
    <original>KTW</original>
    <variation>RTD</variation>
    <location>
        <begin position="32"/>
        <end position="34"/>
    </location>
</feature>
<feature type="sequence conflict" description="In Ref. 2; AA sequence." evidence="3" ref="2">
    <original>H</original>
    <variation>R</variation>
    <location>
        <position position="47"/>
    </location>
</feature>
<feature type="sequence conflict" description="In Ref. 2; AA sequence." evidence="3" ref="2">
    <original>YD</original>
    <variation>HN</variation>
    <location>
        <begin position="52"/>
        <end position="53"/>
    </location>
</feature>
<feature type="sequence conflict" description="In Ref. 2; AA sequence and 4; AA sequence." evidence="3" ref="2 4">
    <original>A</original>
    <variation>R</variation>
    <location>
        <position position="78"/>
    </location>
</feature>
<feature type="sequence conflict" description="In Ref. 2; AA sequence." evidence="3" ref="2">
    <original>T</original>
    <variation>K</variation>
    <location>
        <position position="90"/>
    </location>
</feature>
<organism>
    <name type="scientific">Geobacillus stearothermophilus</name>
    <name type="common">Bacillus stearothermophilus</name>
    <dbReference type="NCBI Taxonomy" id="1422"/>
    <lineage>
        <taxon>Bacteria</taxon>
        <taxon>Bacillati</taxon>
        <taxon>Bacillota</taxon>
        <taxon>Bacilli</taxon>
        <taxon>Bacillales</taxon>
        <taxon>Anoxybacillaceae</taxon>
        <taxon>Geobacillus</taxon>
    </lineage>
</organism>
<comment type="function">
    <text>Protein S19 forms a complex with S13 that binds strongly to the 16S ribosomal RNA.</text>
</comment>
<comment type="similarity">
    <text evidence="3">Belongs to the universal ribosomal protein uS19 family.</text>
</comment>